<reference key="1">
    <citation type="journal article" date="2005" name="J. Bacteriol.">
        <title>Whole-genome sequencing of Staphylococcus haemolyticus uncovers the extreme plasticity of its genome and the evolution of human-colonizing staphylococcal species.</title>
        <authorList>
            <person name="Takeuchi F."/>
            <person name="Watanabe S."/>
            <person name="Baba T."/>
            <person name="Yuzawa H."/>
            <person name="Ito T."/>
            <person name="Morimoto Y."/>
            <person name="Kuroda M."/>
            <person name="Cui L."/>
            <person name="Takahashi M."/>
            <person name="Ankai A."/>
            <person name="Baba S."/>
            <person name="Fukui S."/>
            <person name="Lee J.C."/>
            <person name="Hiramatsu K."/>
        </authorList>
    </citation>
    <scope>NUCLEOTIDE SEQUENCE [LARGE SCALE GENOMIC DNA]</scope>
    <source>
        <strain>JCSC1435</strain>
    </source>
</reference>
<name>MENB_STAHJ</name>
<evidence type="ECO:0000255" key="1">
    <source>
        <dbReference type="HAMAP-Rule" id="MF_01934"/>
    </source>
</evidence>
<evidence type="ECO:0000256" key="2">
    <source>
        <dbReference type="SAM" id="MobiDB-lite"/>
    </source>
</evidence>
<dbReference type="EC" id="4.1.3.36" evidence="1"/>
<dbReference type="EMBL" id="AP006716">
    <property type="protein sequence ID" value="BAE05226.1"/>
    <property type="molecule type" value="Genomic_DNA"/>
</dbReference>
<dbReference type="RefSeq" id="WP_011276187.1">
    <property type="nucleotide sequence ID" value="NC_007168.1"/>
</dbReference>
<dbReference type="SMR" id="Q4L549"/>
<dbReference type="GeneID" id="93781279"/>
<dbReference type="KEGG" id="sha:SH1917"/>
<dbReference type="eggNOG" id="COG0447">
    <property type="taxonomic scope" value="Bacteria"/>
</dbReference>
<dbReference type="HOGENOM" id="CLU_009834_7_7_9"/>
<dbReference type="OrthoDB" id="9775794at2"/>
<dbReference type="UniPathway" id="UPA00079"/>
<dbReference type="UniPathway" id="UPA01057">
    <property type="reaction ID" value="UER00167"/>
</dbReference>
<dbReference type="Proteomes" id="UP000000543">
    <property type="component" value="Chromosome"/>
</dbReference>
<dbReference type="GO" id="GO:0005829">
    <property type="term" value="C:cytosol"/>
    <property type="evidence" value="ECO:0007669"/>
    <property type="project" value="TreeGrafter"/>
</dbReference>
<dbReference type="GO" id="GO:0008935">
    <property type="term" value="F:1,4-dihydroxy-2-naphthoyl-CoA synthase activity"/>
    <property type="evidence" value="ECO:0007669"/>
    <property type="project" value="UniProtKB-UniRule"/>
</dbReference>
<dbReference type="GO" id="GO:0009234">
    <property type="term" value="P:menaquinone biosynthetic process"/>
    <property type="evidence" value="ECO:0007669"/>
    <property type="project" value="UniProtKB-UniRule"/>
</dbReference>
<dbReference type="CDD" id="cd06558">
    <property type="entry name" value="crotonase-like"/>
    <property type="match status" value="1"/>
</dbReference>
<dbReference type="FunFam" id="1.10.12.10:FF:000003">
    <property type="entry name" value="1,4-dihydroxy-2-naphthoyl-CoA synthase"/>
    <property type="match status" value="1"/>
</dbReference>
<dbReference type="FunFam" id="3.90.226.10:FF:000003">
    <property type="entry name" value="1,4-dihydroxy-2-naphthoyl-CoA synthase"/>
    <property type="match status" value="1"/>
</dbReference>
<dbReference type="Gene3D" id="3.90.226.10">
    <property type="entry name" value="2-enoyl-CoA Hydratase, Chain A, domain 1"/>
    <property type="match status" value="1"/>
</dbReference>
<dbReference type="Gene3D" id="1.10.12.10">
    <property type="entry name" value="Lyase 2-enoyl-coa Hydratase, Chain A, domain 2"/>
    <property type="match status" value="1"/>
</dbReference>
<dbReference type="HAMAP" id="MF_01934">
    <property type="entry name" value="MenB"/>
    <property type="match status" value="1"/>
</dbReference>
<dbReference type="InterPro" id="IPR029045">
    <property type="entry name" value="ClpP/crotonase-like_dom_sf"/>
</dbReference>
<dbReference type="InterPro" id="IPR010198">
    <property type="entry name" value="DHNA-CoA_synthase_MenB"/>
</dbReference>
<dbReference type="InterPro" id="IPR018376">
    <property type="entry name" value="Enoyl-CoA_hyd/isom_CS"/>
</dbReference>
<dbReference type="InterPro" id="IPR001753">
    <property type="entry name" value="Enoyl-CoA_hydra/iso"/>
</dbReference>
<dbReference type="InterPro" id="IPR014748">
    <property type="entry name" value="Enoyl-CoA_hydra_C"/>
</dbReference>
<dbReference type="NCBIfam" id="TIGR01929">
    <property type="entry name" value="menB"/>
    <property type="match status" value="1"/>
</dbReference>
<dbReference type="NCBIfam" id="NF005637">
    <property type="entry name" value="PRK07396.1"/>
    <property type="match status" value="1"/>
</dbReference>
<dbReference type="PANTHER" id="PTHR43113:SF1">
    <property type="entry name" value="1,4-DIHYDROXY-2-NAPHTHOYL-COA SYNTHASE, PEROXISOMAL"/>
    <property type="match status" value="1"/>
</dbReference>
<dbReference type="PANTHER" id="PTHR43113">
    <property type="entry name" value="NUCLEOSIDE-DIPHOSPHATE-SUGAR EPIMERASE"/>
    <property type="match status" value="1"/>
</dbReference>
<dbReference type="Pfam" id="PF00378">
    <property type="entry name" value="ECH_1"/>
    <property type="match status" value="1"/>
</dbReference>
<dbReference type="SUPFAM" id="SSF52096">
    <property type="entry name" value="ClpP/crotonase"/>
    <property type="match status" value="1"/>
</dbReference>
<dbReference type="PROSITE" id="PS00166">
    <property type="entry name" value="ENOYL_COA_HYDRATASE"/>
    <property type="match status" value="1"/>
</dbReference>
<gene>
    <name evidence="1" type="primary">menB</name>
    <name type="ordered locus">SH1917</name>
</gene>
<proteinExistence type="inferred from homology"/>
<feature type="chain" id="PRO_0000224822" description="1,4-dihydroxy-2-naphthoyl-CoA synthase">
    <location>
        <begin position="1"/>
        <end position="272"/>
    </location>
</feature>
<feature type="region of interest" description="Disordered" evidence="2">
    <location>
        <begin position="253"/>
        <end position="272"/>
    </location>
</feature>
<feature type="compositionally biased region" description="Basic and acidic residues" evidence="2">
    <location>
        <begin position="253"/>
        <end position="264"/>
    </location>
</feature>
<feature type="binding site" description="in other chain" evidence="1">
    <location>
        <position position="33"/>
    </location>
    <ligand>
        <name>substrate</name>
        <note>ligand shared between two neighboring subunits</note>
    </ligand>
</feature>
<feature type="binding site" description="in other chain" evidence="1">
    <location>
        <begin position="72"/>
        <end position="76"/>
    </location>
    <ligand>
        <name>substrate</name>
        <note>ligand shared between two neighboring subunits</note>
    </ligand>
</feature>
<feature type="binding site" description="in other chain" evidence="1">
    <location>
        <position position="84"/>
    </location>
    <ligand>
        <name>substrate</name>
        <note>ligand shared between two neighboring subunits</note>
    </ligand>
</feature>
<feature type="binding site" description="in other chain" evidence="1">
    <location>
        <begin position="116"/>
        <end position="120"/>
    </location>
    <ligand>
        <name>substrate</name>
        <note>ligand shared between two neighboring subunits</note>
    </ligand>
</feature>
<feature type="binding site" evidence="1">
    <location>
        <begin position="141"/>
        <end position="143"/>
    </location>
    <ligand>
        <name>hydrogencarbonate</name>
        <dbReference type="ChEBI" id="CHEBI:17544"/>
    </ligand>
</feature>
<feature type="binding site" description="in other chain" evidence="1">
    <location>
        <position position="142"/>
    </location>
    <ligand>
        <name>substrate</name>
        <note>ligand shared between two neighboring subunits</note>
    </ligand>
</feature>
<feature type="binding site" description="in other chain" evidence="1">
    <location>
        <position position="148"/>
    </location>
    <ligand>
        <name>substrate</name>
        <note>ligand shared between two neighboring subunits</note>
    </ligand>
</feature>
<feature type="binding site" evidence="1">
    <location>
        <position position="245"/>
    </location>
    <ligand>
        <name>substrate</name>
        <note>ligand shared between two neighboring subunits</note>
    </ligand>
</feature>
<feature type="binding site" evidence="1">
    <location>
        <position position="260"/>
    </location>
    <ligand>
        <name>substrate</name>
        <note>ligand shared between two neighboring subunits</note>
    </ligand>
</feature>
<feature type="site" description="Important for catalysis" evidence="1">
    <location>
        <position position="84"/>
    </location>
</feature>
<feature type="site" description="Important for catalysis" evidence="1">
    <location>
        <position position="245"/>
    </location>
</feature>
<comment type="function">
    <text evidence="1">Converts o-succinylbenzoyl-CoA (OSB-CoA) to 1,4-dihydroxy-2-naphthoyl-CoA (DHNA-CoA).</text>
</comment>
<comment type="catalytic activity">
    <reaction evidence="1">
        <text>2-succinylbenzoyl-CoA + H(+) = 1,4-dihydroxy-2-naphthoyl-CoA + H2O</text>
        <dbReference type="Rhea" id="RHEA:26562"/>
        <dbReference type="ChEBI" id="CHEBI:15377"/>
        <dbReference type="ChEBI" id="CHEBI:15378"/>
        <dbReference type="ChEBI" id="CHEBI:57364"/>
        <dbReference type="ChEBI" id="CHEBI:58897"/>
        <dbReference type="EC" id="4.1.3.36"/>
    </reaction>
</comment>
<comment type="cofactor">
    <cofactor evidence="1">
        <name>hydrogencarbonate</name>
        <dbReference type="ChEBI" id="CHEBI:17544"/>
    </cofactor>
</comment>
<comment type="pathway">
    <text evidence="1">Quinol/quinone metabolism; 1,4-dihydroxy-2-naphthoate biosynthesis; 1,4-dihydroxy-2-naphthoate from chorismate: step 6/7.</text>
</comment>
<comment type="pathway">
    <text evidence="1">Quinol/quinone metabolism; menaquinone biosynthesis.</text>
</comment>
<comment type="similarity">
    <text evidence="1">Belongs to the enoyl-CoA hydratase/isomerase family. MenB subfamily.</text>
</comment>
<protein>
    <recommendedName>
        <fullName evidence="1">1,4-dihydroxy-2-naphthoyl-CoA synthase</fullName>
        <shortName evidence="1">DHNA-CoA synthase</shortName>
        <ecNumber evidence="1">4.1.3.36</ecNumber>
    </recommendedName>
</protein>
<sequence>MTRQWETLREYDEIKYEFYEGIAKVTINRPEVRNAFTPKTVAEMIDAFSRARDDQNISVIILTGEGDKAFCSGGDQKKRGHGGYVGEDQIPRLNVLDLQRLIRVIPKPVIAMVRGYAIGGGNVLNVVCDLTIAADNAIFGQTGPKVGSFDAGYGSGYLARIVGHKKAREIWYLCRQYNAQEALDMGLVNTVVPLDQIEDETVQWCKEIMKHSPTALRFLKAAMNADTDGLAGLQQMAGDATLLYYTTDEAKEGRDAFKEKRDPDFDQFPKFP</sequence>
<accession>Q4L549</accession>
<organism>
    <name type="scientific">Staphylococcus haemolyticus (strain JCSC1435)</name>
    <dbReference type="NCBI Taxonomy" id="279808"/>
    <lineage>
        <taxon>Bacteria</taxon>
        <taxon>Bacillati</taxon>
        <taxon>Bacillota</taxon>
        <taxon>Bacilli</taxon>
        <taxon>Bacillales</taxon>
        <taxon>Staphylococcaceae</taxon>
        <taxon>Staphylococcus</taxon>
    </lineage>
</organism>
<keyword id="KW-0456">Lyase</keyword>
<keyword id="KW-0474">Menaquinone biosynthesis</keyword>